<accession>Q7MLR4</accession>
<comment type="catalytic activity">
    <reaction evidence="1">
        <text>thymidine + ATP = dTMP + ADP + H(+)</text>
        <dbReference type="Rhea" id="RHEA:19129"/>
        <dbReference type="ChEBI" id="CHEBI:15378"/>
        <dbReference type="ChEBI" id="CHEBI:17748"/>
        <dbReference type="ChEBI" id="CHEBI:30616"/>
        <dbReference type="ChEBI" id="CHEBI:63528"/>
        <dbReference type="ChEBI" id="CHEBI:456216"/>
        <dbReference type="EC" id="2.7.1.21"/>
    </reaction>
</comment>
<comment type="subunit">
    <text evidence="1">Homotetramer.</text>
</comment>
<comment type="subcellular location">
    <subcellularLocation>
        <location evidence="1">Cytoplasm</location>
    </subcellularLocation>
</comment>
<comment type="similarity">
    <text evidence="1">Belongs to the thymidine kinase family.</text>
</comment>
<evidence type="ECO:0000255" key="1">
    <source>
        <dbReference type="HAMAP-Rule" id="MF_00124"/>
    </source>
</evidence>
<keyword id="KW-0067">ATP-binding</keyword>
<keyword id="KW-0963">Cytoplasm</keyword>
<keyword id="KW-0237">DNA synthesis</keyword>
<keyword id="KW-0418">Kinase</keyword>
<keyword id="KW-0479">Metal-binding</keyword>
<keyword id="KW-0547">Nucleotide-binding</keyword>
<keyword id="KW-0808">Transferase</keyword>
<keyword id="KW-0862">Zinc</keyword>
<organism>
    <name type="scientific">Vibrio vulnificus (strain YJ016)</name>
    <dbReference type="NCBI Taxonomy" id="196600"/>
    <lineage>
        <taxon>Bacteria</taxon>
        <taxon>Pseudomonadati</taxon>
        <taxon>Pseudomonadota</taxon>
        <taxon>Gammaproteobacteria</taxon>
        <taxon>Vibrionales</taxon>
        <taxon>Vibrionaceae</taxon>
        <taxon>Vibrio</taxon>
    </lineage>
</organism>
<protein>
    <recommendedName>
        <fullName evidence="1">Thymidine kinase</fullName>
        <ecNumber evidence="1">2.7.1.21</ecNumber>
    </recommendedName>
</protein>
<sequence length="192" mass="21752">MAQMYFYYSAMNAGKSTTLLQSSFNYQERGMTPVIFTAALDDRYGIGKVSSRIGLQAEAQLFKADTNLYQEIAALNEVEKRHCILVDECQFLSKEQVYQLTEVVDKLHIPVLCYGLRTDFLGELFEGSKYLLSWADKLVELKTICHCGRKANMVIRTDEHGNAIKEGDQVAIGGNDRYVSVCRQHYKEALGK</sequence>
<dbReference type="EC" id="2.7.1.21" evidence="1"/>
<dbReference type="EMBL" id="BA000037">
    <property type="protein sequence ID" value="BAC94127.1"/>
    <property type="molecule type" value="Genomic_DNA"/>
</dbReference>
<dbReference type="RefSeq" id="WP_011150030.1">
    <property type="nucleotide sequence ID" value="NC_005139.1"/>
</dbReference>
<dbReference type="SMR" id="Q7MLR4"/>
<dbReference type="STRING" id="672.VV93_v1c12760"/>
<dbReference type="KEGG" id="vvy:VV1363"/>
<dbReference type="eggNOG" id="COG1435">
    <property type="taxonomic scope" value="Bacteria"/>
</dbReference>
<dbReference type="HOGENOM" id="CLU_064400_2_1_6"/>
<dbReference type="Proteomes" id="UP000002675">
    <property type="component" value="Chromosome I"/>
</dbReference>
<dbReference type="GO" id="GO:0005829">
    <property type="term" value="C:cytosol"/>
    <property type="evidence" value="ECO:0007669"/>
    <property type="project" value="TreeGrafter"/>
</dbReference>
<dbReference type="GO" id="GO:0005524">
    <property type="term" value="F:ATP binding"/>
    <property type="evidence" value="ECO:0007669"/>
    <property type="project" value="UniProtKB-UniRule"/>
</dbReference>
<dbReference type="GO" id="GO:0004797">
    <property type="term" value="F:thymidine kinase activity"/>
    <property type="evidence" value="ECO:0007669"/>
    <property type="project" value="UniProtKB-UniRule"/>
</dbReference>
<dbReference type="GO" id="GO:0008270">
    <property type="term" value="F:zinc ion binding"/>
    <property type="evidence" value="ECO:0007669"/>
    <property type="project" value="UniProtKB-UniRule"/>
</dbReference>
<dbReference type="GO" id="GO:0071897">
    <property type="term" value="P:DNA biosynthetic process"/>
    <property type="evidence" value="ECO:0007669"/>
    <property type="project" value="UniProtKB-KW"/>
</dbReference>
<dbReference type="GO" id="GO:0046104">
    <property type="term" value="P:thymidine metabolic process"/>
    <property type="evidence" value="ECO:0007669"/>
    <property type="project" value="TreeGrafter"/>
</dbReference>
<dbReference type="FunFam" id="3.30.60.20:FF:000017">
    <property type="entry name" value="Thymidine kinase"/>
    <property type="match status" value="1"/>
</dbReference>
<dbReference type="FunFam" id="3.40.50.300:FF:000323">
    <property type="entry name" value="Thymidine kinase"/>
    <property type="match status" value="1"/>
</dbReference>
<dbReference type="Gene3D" id="3.30.60.20">
    <property type="match status" value="1"/>
</dbReference>
<dbReference type="Gene3D" id="3.40.50.300">
    <property type="entry name" value="P-loop containing nucleotide triphosphate hydrolases"/>
    <property type="match status" value="1"/>
</dbReference>
<dbReference type="HAMAP" id="MF_00124">
    <property type="entry name" value="Thymidine_kinase"/>
    <property type="match status" value="1"/>
</dbReference>
<dbReference type="InterPro" id="IPR027417">
    <property type="entry name" value="P-loop_NTPase"/>
</dbReference>
<dbReference type="InterPro" id="IPR001267">
    <property type="entry name" value="Thymidine_kinase"/>
</dbReference>
<dbReference type="InterPro" id="IPR020633">
    <property type="entry name" value="Thymidine_kinase_CS"/>
</dbReference>
<dbReference type="NCBIfam" id="NF003300">
    <property type="entry name" value="PRK04296.1-5"/>
    <property type="match status" value="1"/>
</dbReference>
<dbReference type="PANTHER" id="PTHR11441">
    <property type="entry name" value="THYMIDINE KINASE"/>
    <property type="match status" value="1"/>
</dbReference>
<dbReference type="PANTHER" id="PTHR11441:SF0">
    <property type="entry name" value="THYMIDINE KINASE, CYTOSOLIC"/>
    <property type="match status" value="1"/>
</dbReference>
<dbReference type="Pfam" id="PF00265">
    <property type="entry name" value="TK"/>
    <property type="match status" value="1"/>
</dbReference>
<dbReference type="PIRSF" id="PIRSF035805">
    <property type="entry name" value="TK_cell"/>
    <property type="match status" value="1"/>
</dbReference>
<dbReference type="SUPFAM" id="SSF57716">
    <property type="entry name" value="Glucocorticoid receptor-like (DNA-binding domain)"/>
    <property type="match status" value="1"/>
</dbReference>
<dbReference type="SUPFAM" id="SSF52540">
    <property type="entry name" value="P-loop containing nucleoside triphosphate hydrolases"/>
    <property type="match status" value="1"/>
</dbReference>
<dbReference type="PROSITE" id="PS00603">
    <property type="entry name" value="TK_CELLULAR_TYPE"/>
    <property type="match status" value="1"/>
</dbReference>
<reference key="1">
    <citation type="journal article" date="2003" name="Genome Res.">
        <title>Comparative genome analysis of Vibrio vulnificus, a marine pathogen.</title>
        <authorList>
            <person name="Chen C.-Y."/>
            <person name="Wu K.-M."/>
            <person name="Chang Y.-C."/>
            <person name="Chang C.-H."/>
            <person name="Tsai H.-C."/>
            <person name="Liao T.-L."/>
            <person name="Liu Y.-M."/>
            <person name="Chen H.-J."/>
            <person name="Shen A.B.-T."/>
            <person name="Li J.-C."/>
            <person name="Su T.-L."/>
            <person name="Shao C.-P."/>
            <person name="Lee C.-T."/>
            <person name="Hor L.-I."/>
            <person name="Tsai S.-F."/>
        </authorList>
    </citation>
    <scope>NUCLEOTIDE SEQUENCE [LARGE SCALE GENOMIC DNA]</scope>
    <source>
        <strain>YJ016</strain>
    </source>
</reference>
<name>KITH_VIBVY</name>
<proteinExistence type="inferred from homology"/>
<gene>
    <name evidence="1" type="primary">tdk</name>
    <name type="ordered locus">VV1363</name>
</gene>
<feature type="chain" id="PRO_0000175047" description="Thymidine kinase">
    <location>
        <begin position="1"/>
        <end position="192"/>
    </location>
</feature>
<feature type="active site" description="Proton acceptor" evidence="1">
    <location>
        <position position="88"/>
    </location>
</feature>
<feature type="binding site" evidence="1">
    <location>
        <begin position="9"/>
        <end position="16"/>
    </location>
    <ligand>
        <name>ATP</name>
        <dbReference type="ChEBI" id="CHEBI:30616"/>
    </ligand>
</feature>
<feature type="binding site" evidence="1">
    <location>
        <begin position="87"/>
        <end position="90"/>
    </location>
    <ligand>
        <name>ATP</name>
        <dbReference type="ChEBI" id="CHEBI:30616"/>
    </ligand>
</feature>
<feature type="binding site" evidence="1">
    <location>
        <position position="145"/>
    </location>
    <ligand>
        <name>Zn(2+)</name>
        <dbReference type="ChEBI" id="CHEBI:29105"/>
    </ligand>
</feature>
<feature type="binding site" evidence="1">
    <location>
        <position position="147"/>
    </location>
    <ligand>
        <name>Zn(2+)</name>
        <dbReference type="ChEBI" id="CHEBI:29105"/>
    </ligand>
</feature>
<feature type="binding site" evidence="1">
    <location>
        <position position="182"/>
    </location>
    <ligand>
        <name>Zn(2+)</name>
        <dbReference type="ChEBI" id="CHEBI:29105"/>
    </ligand>
</feature>
<feature type="binding site" evidence="1">
    <location>
        <position position="185"/>
    </location>
    <ligand>
        <name>Zn(2+)</name>
        <dbReference type="ChEBI" id="CHEBI:29105"/>
    </ligand>
</feature>